<reference key="1">
    <citation type="submission" date="2008-04" db="EMBL/GenBank/DDBJ databases">
        <title>Complete sequence of chromosome of Natranaerobius thermophilus JW/NM-WN-LF.</title>
        <authorList>
            <consortium name="US DOE Joint Genome Institute"/>
            <person name="Copeland A."/>
            <person name="Lucas S."/>
            <person name="Lapidus A."/>
            <person name="Glavina del Rio T."/>
            <person name="Dalin E."/>
            <person name="Tice H."/>
            <person name="Bruce D."/>
            <person name="Goodwin L."/>
            <person name="Pitluck S."/>
            <person name="Chertkov O."/>
            <person name="Brettin T."/>
            <person name="Detter J.C."/>
            <person name="Han C."/>
            <person name="Kuske C.R."/>
            <person name="Schmutz J."/>
            <person name="Larimer F."/>
            <person name="Land M."/>
            <person name="Hauser L."/>
            <person name="Kyrpides N."/>
            <person name="Lykidis A."/>
            <person name="Mesbah N.M."/>
            <person name="Wiegel J."/>
        </authorList>
    </citation>
    <scope>NUCLEOTIDE SEQUENCE [LARGE SCALE GENOMIC DNA]</scope>
    <source>
        <strain>ATCC BAA-1301 / DSM 18059 / JW/NM-WN-LF</strain>
    </source>
</reference>
<proteinExistence type="inferred from homology"/>
<dbReference type="EC" id="5.4.3.8" evidence="1"/>
<dbReference type="EMBL" id="CP001034">
    <property type="protein sequence ID" value="ACB84714.1"/>
    <property type="molecule type" value="Genomic_DNA"/>
</dbReference>
<dbReference type="RefSeq" id="WP_012447589.1">
    <property type="nucleotide sequence ID" value="NC_010718.1"/>
</dbReference>
<dbReference type="SMR" id="B2A1H4"/>
<dbReference type="FunCoup" id="B2A1H4">
    <property type="interactions" value="400"/>
</dbReference>
<dbReference type="STRING" id="457570.Nther_1131"/>
<dbReference type="KEGG" id="nth:Nther_1131"/>
<dbReference type="eggNOG" id="COG0001">
    <property type="taxonomic scope" value="Bacteria"/>
</dbReference>
<dbReference type="HOGENOM" id="CLU_016922_1_5_9"/>
<dbReference type="InParanoid" id="B2A1H4"/>
<dbReference type="OrthoDB" id="9807885at2"/>
<dbReference type="UniPathway" id="UPA00251">
    <property type="reaction ID" value="UER00317"/>
</dbReference>
<dbReference type="Proteomes" id="UP000001683">
    <property type="component" value="Chromosome"/>
</dbReference>
<dbReference type="GO" id="GO:0005737">
    <property type="term" value="C:cytoplasm"/>
    <property type="evidence" value="ECO:0007669"/>
    <property type="project" value="UniProtKB-SubCell"/>
</dbReference>
<dbReference type="GO" id="GO:0042286">
    <property type="term" value="F:glutamate-1-semialdehyde 2,1-aminomutase activity"/>
    <property type="evidence" value="ECO:0007669"/>
    <property type="project" value="UniProtKB-UniRule"/>
</dbReference>
<dbReference type="GO" id="GO:0030170">
    <property type="term" value="F:pyridoxal phosphate binding"/>
    <property type="evidence" value="ECO:0007669"/>
    <property type="project" value="InterPro"/>
</dbReference>
<dbReference type="GO" id="GO:0008483">
    <property type="term" value="F:transaminase activity"/>
    <property type="evidence" value="ECO:0007669"/>
    <property type="project" value="InterPro"/>
</dbReference>
<dbReference type="GO" id="GO:0006782">
    <property type="term" value="P:protoporphyrinogen IX biosynthetic process"/>
    <property type="evidence" value="ECO:0007669"/>
    <property type="project" value="UniProtKB-UniRule"/>
</dbReference>
<dbReference type="CDD" id="cd00610">
    <property type="entry name" value="OAT_like"/>
    <property type="match status" value="1"/>
</dbReference>
<dbReference type="FunFam" id="3.40.640.10:FF:000021">
    <property type="entry name" value="Glutamate-1-semialdehyde 2,1-aminomutase"/>
    <property type="match status" value="1"/>
</dbReference>
<dbReference type="Gene3D" id="3.90.1150.10">
    <property type="entry name" value="Aspartate Aminotransferase, domain 1"/>
    <property type="match status" value="1"/>
</dbReference>
<dbReference type="Gene3D" id="3.40.640.10">
    <property type="entry name" value="Type I PLP-dependent aspartate aminotransferase-like (Major domain)"/>
    <property type="match status" value="1"/>
</dbReference>
<dbReference type="HAMAP" id="MF_00375">
    <property type="entry name" value="HemL_aminotrans_3"/>
    <property type="match status" value="1"/>
</dbReference>
<dbReference type="InterPro" id="IPR004639">
    <property type="entry name" value="4pyrrol_synth_GluAld_NH2Trfase"/>
</dbReference>
<dbReference type="InterPro" id="IPR005814">
    <property type="entry name" value="Aminotrans_3"/>
</dbReference>
<dbReference type="InterPro" id="IPR049704">
    <property type="entry name" value="Aminotrans_3_PPA_site"/>
</dbReference>
<dbReference type="InterPro" id="IPR015424">
    <property type="entry name" value="PyrdxlP-dep_Trfase"/>
</dbReference>
<dbReference type="InterPro" id="IPR015421">
    <property type="entry name" value="PyrdxlP-dep_Trfase_major"/>
</dbReference>
<dbReference type="InterPro" id="IPR015422">
    <property type="entry name" value="PyrdxlP-dep_Trfase_small"/>
</dbReference>
<dbReference type="NCBIfam" id="TIGR00713">
    <property type="entry name" value="hemL"/>
    <property type="match status" value="1"/>
</dbReference>
<dbReference type="NCBIfam" id="NF000818">
    <property type="entry name" value="PRK00062.1"/>
    <property type="match status" value="1"/>
</dbReference>
<dbReference type="PANTHER" id="PTHR43713">
    <property type="entry name" value="GLUTAMATE-1-SEMIALDEHYDE 2,1-AMINOMUTASE"/>
    <property type="match status" value="1"/>
</dbReference>
<dbReference type="PANTHER" id="PTHR43713:SF3">
    <property type="entry name" value="GLUTAMATE-1-SEMIALDEHYDE 2,1-AMINOMUTASE 1, CHLOROPLASTIC-RELATED"/>
    <property type="match status" value="1"/>
</dbReference>
<dbReference type="Pfam" id="PF00202">
    <property type="entry name" value="Aminotran_3"/>
    <property type="match status" value="1"/>
</dbReference>
<dbReference type="PIRSF" id="PIRSF000521">
    <property type="entry name" value="Transaminase_4ab_Lys_Orn"/>
    <property type="match status" value="1"/>
</dbReference>
<dbReference type="SUPFAM" id="SSF53383">
    <property type="entry name" value="PLP-dependent transferases"/>
    <property type="match status" value="1"/>
</dbReference>
<dbReference type="PROSITE" id="PS00600">
    <property type="entry name" value="AA_TRANSFER_CLASS_3"/>
    <property type="match status" value="1"/>
</dbReference>
<comment type="catalytic activity">
    <reaction evidence="1">
        <text>(S)-4-amino-5-oxopentanoate = 5-aminolevulinate</text>
        <dbReference type="Rhea" id="RHEA:14265"/>
        <dbReference type="ChEBI" id="CHEBI:57501"/>
        <dbReference type="ChEBI" id="CHEBI:356416"/>
        <dbReference type="EC" id="5.4.3.8"/>
    </reaction>
</comment>
<comment type="cofactor">
    <cofactor evidence="1">
        <name>pyridoxal 5'-phosphate</name>
        <dbReference type="ChEBI" id="CHEBI:597326"/>
    </cofactor>
</comment>
<comment type="pathway">
    <text evidence="1">Porphyrin-containing compound metabolism; protoporphyrin-IX biosynthesis; 5-aminolevulinate from L-glutamyl-tRNA(Glu): step 2/2.</text>
</comment>
<comment type="subunit">
    <text evidence="1">Homodimer.</text>
</comment>
<comment type="subcellular location">
    <subcellularLocation>
        <location evidence="1">Cytoplasm</location>
    </subcellularLocation>
</comment>
<comment type="similarity">
    <text evidence="1">Belongs to the class-III pyridoxal-phosphate-dependent aminotransferase family. HemL subfamily.</text>
</comment>
<accession>B2A1H4</accession>
<name>GSA_NATTJ</name>
<keyword id="KW-0963">Cytoplasm</keyword>
<keyword id="KW-0413">Isomerase</keyword>
<keyword id="KW-0627">Porphyrin biosynthesis</keyword>
<keyword id="KW-0663">Pyridoxal phosphate</keyword>
<keyword id="KW-1185">Reference proteome</keyword>
<feature type="chain" id="PRO_1000121903" description="Glutamate-1-semialdehyde 2,1-aminomutase">
    <location>
        <begin position="1"/>
        <end position="430"/>
    </location>
</feature>
<feature type="modified residue" description="N6-(pyridoxal phosphate)lysine" evidence="1">
    <location>
        <position position="267"/>
    </location>
</feature>
<organism>
    <name type="scientific">Natranaerobius thermophilus (strain ATCC BAA-1301 / DSM 18059 / JW/NM-WN-LF)</name>
    <dbReference type="NCBI Taxonomy" id="457570"/>
    <lineage>
        <taxon>Bacteria</taxon>
        <taxon>Bacillati</taxon>
        <taxon>Bacillota</taxon>
        <taxon>Clostridia</taxon>
        <taxon>Natranaerobiales</taxon>
        <taxon>Natranaerobiaceae</taxon>
        <taxon>Natranaerobius</taxon>
    </lineage>
</organism>
<protein>
    <recommendedName>
        <fullName evidence="1">Glutamate-1-semialdehyde 2,1-aminomutase</fullName>
        <shortName evidence="1">GSA</shortName>
        <ecNumber evidence="1">5.4.3.8</ecNumber>
    </recommendedName>
    <alternativeName>
        <fullName evidence="1">Glutamate-1-semialdehyde aminotransferase</fullName>
        <shortName evidence="1">GSA-AT</shortName>
    </alternativeName>
</protein>
<sequence length="430" mass="46202">MRYANSQKYFKTACDLMPGGVNSPARAFSSVESDPLFIKDGSGSKVYDVDDNEYIDYVASYGPLILGHCHPQIRDALKEQIDYGTGYGSPTELENEMAELVIEAVPSIEMVRMVNSGTEATMSALRLARGYTGKNKIVKLTGCYHGHSDSLLIKAGSGVTTLGLPDSPGVPASIAENTITVPYNNLEVMEQVFNKYGDDIAGVILEPVAGNMGVVPPNEGYLEGLRELTSKYGSLLIFDEVMTGFRVSYGGAQAYYGVTPDLTCLGKVIGGGLPVGAYGGKEEIMEYIAPAGSIYQAGTLSGNPIAMRAGIETLKVLRQEGSYDQLESKSKHLAEGLAKVADKNGVSVTINRVGTMVGMYFTEGPVTDFESATSSDNDKFVKYFETMLSEGVYLAPSQFEAMFMSLVHTQEDIEKTIQIADKALSKAAQV</sequence>
<gene>
    <name evidence="1" type="primary">hemL</name>
    <name type="ordered locus">Nther_1131</name>
</gene>
<evidence type="ECO:0000255" key="1">
    <source>
        <dbReference type="HAMAP-Rule" id="MF_00375"/>
    </source>
</evidence>